<reference key="1">
    <citation type="journal article" date="2004" name="Genome Res.">
        <title>The status, quality, and expansion of the NIH full-length cDNA project: the Mammalian Gene Collection (MGC).</title>
        <authorList>
            <consortium name="The MGC Project Team"/>
        </authorList>
    </citation>
    <scope>NUCLEOTIDE SEQUENCE [LARGE SCALE MRNA]</scope>
    <source>
        <strain>C57BL/6J</strain>
        <tissue>Brain</tissue>
    </source>
</reference>
<reference key="2">
    <citation type="journal article" date="2010" name="Cell">
        <title>A tissue-specific atlas of mouse protein phosphorylation and expression.</title>
        <authorList>
            <person name="Huttlin E.L."/>
            <person name="Jedrychowski M.P."/>
            <person name="Elias J.E."/>
            <person name="Goswami T."/>
            <person name="Rad R."/>
            <person name="Beausoleil S.A."/>
            <person name="Villen J."/>
            <person name="Haas W."/>
            <person name="Sowa M.E."/>
            <person name="Gygi S.P."/>
        </authorList>
    </citation>
    <scope>IDENTIFICATION BY MASS SPECTROMETRY [LARGE SCALE ANALYSIS]</scope>
    <source>
        <tissue>Brain</tissue>
    </source>
</reference>
<gene>
    <name evidence="2" type="primary">Entrep3</name>
    <name evidence="6" type="synonym">Fam189b</name>
</gene>
<feature type="chain" id="PRO_0000393335" description="Protein ENTREP3">
    <location>
        <begin position="1"/>
        <end position="669"/>
    </location>
</feature>
<feature type="transmembrane region" description="Helical" evidence="3">
    <location>
        <begin position="34"/>
        <end position="54"/>
    </location>
</feature>
<feature type="transmembrane region" description="Helical" evidence="3">
    <location>
        <begin position="67"/>
        <end position="87"/>
    </location>
</feature>
<feature type="transmembrane region" description="Helical" evidence="3">
    <location>
        <begin position="91"/>
        <end position="111"/>
    </location>
</feature>
<feature type="transmembrane region" description="Helical" evidence="3">
    <location>
        <begin position="174"/>
        <end position="194"/>
    </location>
</feature>
<feature type="region of interest" description="Disordered" evidence="4">
    <location>
        <begin position="387"/>
        <end position="420"/>
    </location>
</feature>
<feature type="region of interest" description="Disordered" evidence="4">
    <location>
        <begin position="445"/>
        <end position="502"/>
    </location>
</feature>
<feature type="region of interest" description="Disordered" evidence="4">
    <location>
        <begin position="550"/>
        <end position="571"/>
    </location>
</feature>
<feature type="region of interest" description="Disordered" evidence="4">
    <location>
        <begin position="597"/>
        <end position="624"/>
    </location>
</feature>
<feature type="compositionally biased region" description="Low complexity" evidence="4">
    <location>
        <begin position="399"/>
        <end position="408"/>
    </location>
</feature>
<feature type="modified residue" description="Phosphoserine" evidence="2">
    <location>
        <position position="359"/>
    </location>
</feature>
<feature type="modified residue" description="Phosphoserine" evidence="2">
    <location>
        <position position="390"/>
    </location>
</feature>
<feature type="modified residue" description="Phosphoserine" evidence="2">
    <location>
        <position position="494"/>
    </location>
</feature>
<feature type="modified residue" description="Phosphoserine" evidence="2">
    <location>
        <position position="575"/>
    </location>
</feature>
<feature type="glycosylation site" description="N-linked (GlcNAc...) asparagine" evidence="3">
    <location>
        <position position="160"/>
    </location>
</feature>
<evidence type="ECO:0000250" key="1"/>
<evidence type="ECO:0000250" key="2">
    <source>
        <dbReference type="UniProtKB" id="P81408"/>
    </source>
</evidence>
<evidence type="ECO:0000255" key="3"/>
<evidence type="ECO:0000256" key="4">
    <source>
        <dbReference type="SAM" id="MobiDB-lite"/>
    </source>
</evidence>
<evidence type="ECO:0000305" key="5"/>
<evidence type="ECO:0000312" key="6">
    <source>
        <dbReference type="MGI" id="MGI:1915771"/>
    </source>
</evidence>
<organism>
    <name type="scientific">Mus musculus</name>
    <name type="common">Mouse</name>
    <dbReference type="NCBI Taxonomy" id="10090"/>
    <lineage>
        <taxon>Eukaryota</taxon>
        <taxon>Metazoa</taxon>
        <taxon>Chordata</taxon>
        <taxon>Craniata</taxon>
        <taxon>Vertebrata</taxon>
        <taxon>Euteleostomi</taxon>
        <taxon>Mammalia</taxon>
        <taxon>Eutheria</taxon>
        <taxon>Euarchontoglires</taxon>
        <taxon>Glires</taxon>
        <taxon>Rodentia</taxon>
        <taxon>Myomorpha</taxon>
        <taxon>Muroidea</taxon>
        <taxon>Muridae</taxon>
        <taxon>Murinae</taxon>
        <taxon>Mus</taxon>
        <taxon>Mus</taxon>
    </lineage>
</organism>
<comment type="subunit">
    <text evidence="1">May interact with WWOX.</text>
</comment>
<comment type="subcellular location">
    <subcellularLocation>
        <location evidence="5">Membrane</location>
        <topology evidence="5">Multi-pass membrane protein</topology>
    </subcellularLocation>
</comment>
<comment type="similarity">
    <text evidence="5">Belongs to the ENTREP family.</text>
</comment>
<sequence length="669" mass="72016">MMPSPSDSSRSLTSRPSTRGLTHLRLHRPWLQALLTLGLAQVLLGILVITFSMVASSVTTTESIKRSCPSWAGFSLAFSGLVGIVSWKRPFTLVISFFSLLSVLCVMLSMAGSVLSCKNAQLARDFRECSMEGKVCVCCPPIPLHRPCPEWGQELKVALNSTCDEARGALKNLLFSVCGLTICAAIICTLSAIVCCVQIFSLDLVHMQLAPERSVSGPLGPLACTSSPPAPLLHTMLDLEEFVPPVPPPPYYPPEYTCSSETDAQSITYNGSMDSPVPLYPTDCPPSYEAVMGLRRDSQATLFDPQLHDGSCVCERVASIVDVSMDSGSLVLSAIGDLPGGSSPSEDSCLLELQGSVRSVDYVLFRSIQRSRAGYCLSLDCGLRGPFEDSPLPRRPPRAARSYSCSAPEAPPPLGAPTAARSCHRLEGWPPWVGPCFPELRRRVPRGGSRSAAPPPARAPARRFSDSSGSLTPPGHRPPHRTPPPPLLLPRSHSDPGITTSSDIADFRDLYTKVLEEEAASVSSADTGLCSEACLFRLARCPSPKLLRARSAEKRRPVPTFQKVPLPSGPTPAHSLGDLKGSWPGRGLVTRFLQLSRRSPDPTGTGAHGYKQVRRSPWGRPGRESLHLRSCGDLSSGSSLRRLLSARRLEHGIRPHSLSLNGGSRETGL</sequence>
<proteinExistence type="evidence at protein level"/>
<dbReference type="EMBL" id="BC088990">
    <property type="protein sequence ID" value="AAH88990.1"/>
    <property type="molecule type" value="mRNA"/>
</dbReference>
<dbReference type="CCDS" id="CCDS17492.1"/>
<dbReference type="RefSeq" id="NP_001014995.1">
    <property type="nucleotide sequence ID" value="NM_001014995.2"/>
</dbReference>
<dbReference type="RefSeq" id="XP_036019158.1">
    <property type="nucleotide sequence ID" value="XM_036163265.1"/>
</dbReference>
<dbReference type="FunCoup" id="Q5HZJ5">
    <property type="interactions" value="63"/>
</dbReference>
<dbReference type="IntAct" id="Q5HZJ5">
    <property type="interactions" value="1"/>
</dbReference>
<dbReference type="STRING" id="10090.ENSMUSP00000039261"/>
<dbReference type="GlyCosmos" id="Q5HZJ5">
    <property type="glycosylation" value="1 site, No reported glycans"/>
</dbReference>
<dbReference type="GlyGen" id="Q5HZJ5">
    <property type="glycosylation" value="2 sites, 1 N-linked glycan (1 site)"/>
</dbReference>
<dbReference type="iPTMnet" id="Q5HZJ5"/>
<dbReference type="PhosphoSitePlus" id="Q5HZJ5"/>
<dbReference type="SwissPalm" id="Q5HZJ5"/>
<dbReference type="jPOST" id="Q5HZJ5"/>
<dbReference type="PaxDb" id="10090-ENSMUSP00000039261"/>
<dbReference type="ProteomicsDB" id="275990"/>
<dbReference type="Antibodypedia" id="1675">
    <property type="antibodies" value="74 antibodies from 14 providers"/>
</dbReference>
<dbReference type="DNASU" id="68521"/>
<dbReference type="Ensembl" id="ENSMUST00000041913.13">
    <property type="protein sequence ID" value="ENSMUSP00000039261.7"/>
    <property type="gene ID" value="ENSMUSG00000032657.16"/>
</dbReference>
<dbReference type="GeneID" id="68521"/>
<dbReference type="KEGG" id="mmu:68521"/>
<dbReference type="UCSC" id="uc008pxy.1">
    <property type="organism name" value="mouse"/>
</dbReference>
<dbReference type="AGR" id="MGI:1915771"/>
<dbReference type="CTD" id="10712"/>
<dbReference type="MGI" id="MGI:1915771">
    <property type="gene designation" value="Entrep3"/>
</dbReference>
<dbReference type="VEuPathDB" id="HostDB:ENSMUSG00000032657"/>
<dbReference type="eggNOG" id="ENOG502RB7D">
    <property type="taxonomic scope" value="Eukaryota"/>
</dbReference>
<dbReference type="GeneTree" id="ENSGT00530000063335"/>
<dbReference type="InParanoid" id="Q5HZJ5"/>
<dbReference type="OMA" id="ICCIQIF"/>
<dbReference type="OrthoDB" id="10012909at2759"/>
<dbReference type="PhylomeDB" id="Q5HZJ5"/>
<dbReference type="TreeFam" id="TF332736"/>
<dbReference type="BioGRID-ORCS" id="68521">
    <property type="hits" value="4 hits in 78 CRISPR screens"/>
</dbReference>
<dbReference type="PRO" id="PR:Q5HZJ5"/>
<dbReference type="Proteomes" id="UP000000589">
    <property type="component" value="Chromosome 3"/>
</dbReference>
<dbReference type="RNAct" id="Q5HZJ5">
    <property type="molecule type" value="protein"/>
</dbReference>
<dbReference type="Bgee" id="ENSMUSG00000032657">
    <property type="expression patterns" value="Expressed in lumbar dorsal root ganglion and 239 other cell types or tissues"/>
</dbReference>
<dbReference type="ExpressionAtlas" id="Q5HZJ5">
    <property type="expression patterns" value="baseline and differential"/>
</dbReference>
<dbReference type="GO" id="GO:0016020">
    <property type="term" value="C:membrane"/>
    <property type="evidence" value="ECO:0007669"/>
    <property type="project" value="UniProtKB-SubCell"/>
</dbReference>
<dbReference type="GO" id="GO:0050699">
    <property type="term" value="F:WW domain binding"/>
    <property type="evidence" value="ECO:0007669"/>
    <property type="project" value="Ensembl"/>
</dbReference>
<dbReference type="InterPro" id="IPR007237">
    <property type="entry name" value="CD20-like"/>
</dbReference>
<dbReference type="InterPro" id="IPR030431">
    <property type="entry name" value="ENTREP1-3"/>
</dbReference>
<dbReference type="PANTHER" id="PTHR17615:SF7">
    <property type="entry name" value="PROTEIN ENTREP3"/>
    <property type="match status" value="1"/>
</dbReference>
<dbReference type="PANTHER" id="PTHR17615">
    <property type="entry name" value="PROTEIN FAM189A"/>
    <property type="match status" value="1"/>
</dbReference>
<dbReference type="Pfam" id="PF04103">
    <property type="entry name" value="CD20"/>
    <property type="match status" value="1"/>
</dbReference>
<name>EREP3_MOUSE</name>
<accession>Q5HZJ5</accession>
<protein>
    <recommendedName>
        <fullName evidence="2">Protein ENTREP3</fullName>
    </recommendedName>
    <alternativeName>
        <fullName evidence="2">Endosomal transmembrane epsin interactor 3</fullName>
    </alternativeName>
</protein>
<keyword id="KW-0325">Glycoprotein</keyword>
<keyword id="KW-0472">Membrane</keyword>
<keyword id="KW-0597">Phosphoprotein</keyword>
<keyword id="KW-1185">Reference proteome</keyword>
<keyword id="KW-0812">Transmembrane</keyword>
<keyword id="KW-1133">Transmembrane helix</keyword>